<gene>
    <name evidence="14 18" type="primary">MCAT</name>
    <name evidence="13" type="synonym">MT</name>
</gene>
<organism>
    <name type="scientific">Homo sapiens</name>
    <name type="common">Human</name>
    <dbReference type="NCBI Taxonomy" id="9606"/>
    <lineage>
        <taxon>Eukaryota</taxon>
        <taxon>Metazoa</taxon>
        <taxon>Chordata</taxon>
        <taxon>Craniata</taxon>
        <taxon>Vertebrata</taxon>
        <taxon>Euteleostomi</taxon>
        <taxon>Mammalia</taxon>
        <taxon>Eutheria</taxon>
        <taxon>Euarchontoglires</taxon>
        <taxon>Primates</taxon>
        <taxon>Haplorrhini</taxon>
        <taxon>Catarrhini</taxon>
        <taxon>Hominidae</taxon>
        <taxon>Homo</taxon>
    </lineage>
</organism>
<accession>Q8IVS2</accession>
<accession>B0QY72</accession>
<accession>O95510</accession>
<accession>O95511</accession>
<keyword id="KW-0002">3D-structure</keyword>
<keyword id="KW-0025">Alternative splicing</keyword>
<keyword id="KW-0225">Disease variant</keyword>
<keyword id="KW-0275">Fatty acid biosynthesis</keyword>
<keyword id="KW-0276">Fatty acid metabolism</keyword>
<keyword id="KW-0444">Lipid biosynthesis</keyword>
<keyword id="KW-0443">Lipid metabolism</keyword>
<keyword id="KW-0496">Mitochondrion</keyword>
<keyword id="KW-1267">Proteomics identification</keyword>
<keyword id="KW-1185">Reference proteome</keyword>
<keyword id="KW-0808">Transferase</keyword>
<keyword id="KW-0809">Transit peptide</keyword>
<feature type="transit peptide" description="Mitochondrion" evidence="3">
    <location>
        <begin position="1"/>
        <end position="21"/>
    </location>
</feature>
<feature type="chain" id="PRO_0000000589" description="Malonyl-CoA-acyl carrier protein transacylase, mitochondrial">
    <location>
        <begin position="22"/>
        <end position="390"/>
    </location>
</feature>
<feature type="active site" evidence="1">
    <location>
        <position position="153"/>
    </location>
</feature>
<feature type="active site" evidence="1">
    <location>
        <position position="270"/>
    </location>
</feature>
<feature type="modified residue" description="N6-succinyllysine" evidence="2">
    <location>
        <position position="314"/>
    </location>
</feature>
<feature type="splice variant" id="VSP_010517" description="In isoform 2." evidence="10 11 12">
    <original>LYAVKIRAE</original>
    <variation>STVSPEEFL</variation>
    <location>
        <begin position="172"/>
        <end position="180"/>
    </location>
</feature>
<feature type="splice variant" id="VSP_010518" description="In isoform 2." evidence="10 11 12">
    <location>
        <begin position="181"/>
        <end position="390"/>
    </location>
</feature>
<feature type="sequence variant" id="VAR_089091" description="In OPA15; dbSNP:rs568778084." evidence="7">
    <original>L</original>
    <variation>R</variation>
    <location>
        <position position="81"/>
    </location>
</feature>
<feature type="sequence variant" id="VAR_089092" description="In OPA15; dbSNP:rs759491564." evidence="7">
    <original>R</original>
    <variation>W</variation>
    <location>
        <position position="212"/>
    </location>
</feature>
<feature type="sequence variant" id="VAR_089093" description="In OPA15." evidence="8">
    <original>E</original>
    <variation>K</variation>
    <location>
        <position position="275"/>
    </location>
</feature>
<feature type="sequence variant" id="VAR_048183" description="In dbSNP:rs13815." evidence="5">
    <original>A</original>
    <variation>G</variation>
    <location>
        <position position="303"/>
    </location>
</feature>
<feature type="mutagenesis site" description="Strongly decreased affinity for malonyl-CoA." evidence="6">
    <original>R</original>
    <variation>A</variation>
    <variation>G</variation>
    <variation>Q</variation>
    <location>
        <position position="178"/>
    </location>
</feature>
<feature type="turn" evidence="25">
    <location>
        <begin position="59"/>
        <end position="61"/>
    </location>
</feature>
<feature type="strand" evidence="24">
    <location>
        <begin position="63"/>
        <end position="67"/>
    </location>
</feature>
<feature type="turn" evidence="24">
    <location>
        <begin position="75"/>
        <end position="83"/>
    </location>
</feature>
<feature type="helix" evidence="24">
    <location>
        <begin position="87"/>
        <end position="98"/>
    </location>
</feature>
<feature type="helix" evidence="24">
    <location>
        <begin position="102"/>
        <end position="108"/>
    </location>
</feature>
<feature type="helix" evidence="24">
    <location>
        <begin position="111"/>
        <end position="115"/>
    </location>
</feature>
<feature type="helix" evidence="24">
    <location>
        <begin position="117"/>
        <end position="138"/>
    </location>
</feature>
<feature type="helix" evidence="24">
    <location>
        <begin position="140"/>
        <end position="144"/>
    </location>
</feature>
<feature type="strand" evidence="24">
    <location>
        <begin position="146"/>
        <end position="151"/>
    </location>
</feature>
<feature type="helix" evidence="24">
    <location>
        <begin position="155"/>
        <end position="162"/>
    </location>
</feature>
<feature type="helix" evidence="24">
    <location>
        <begin position="168"/>
        <end position="187"/>
    </location>
</feature>
<feature type="strand" evidence="24">
    <location>
        <begin position="191"/>
        <end position="197"/>
    </location>
</feature>
<feature type="helix" evidence="24">
    <location>
        <begin position="204"/>
        <end position="217"/>
    </location>
</feature>
<feature type="strand" evidence="24">
    <location>
        <begin position="225"/>
        <end position="232"/>
    </location>
</feature>
<feature type="strand" evidence="24">
    <location>
        <begin position="235"/>
        <end position="241"/>
    </location>
</feature>
<feature type="helix" evidence="24">
    <location>
        <begin position="242"/>
        <end position="250"/>
    </location>
</feature>
<feature type="helix" evidence="24">
    <location>
        <begin position="252"/>
        <end position="255"/>
    </location>
</feature>
<feature type="strand" evidence="24">
    <location>
        <begin position="259"/>
        <end position="262"/>
    </location>
</feature>
<feature type="helix" evidence="24">
    <location>
        <begin position="272"/>
        <end position="274"/>
    </location>
</feature>
<feature type="helix" evidence="24">
    <location>
        <begin position="275"/>
        <end position="286"/>
    </location>
</feature>
<feature type="strand" evidence="24">
    <location>
        <begin position="294"/>
        <end position="298"/>
    </location>
</feature>
<feature type="turn" evidence="24">
    <location>
        <begin position="300"/>
        <end position="302"/>
    </location>
</feature>
<feature type="strand" evidence="24">
    <location>
        <begin position="303"/>
        <end position="305"/>
    </location>
</feature>
<feature type="helix" evidence="24">
    <location>
        <begin position="309"/>
        <end position="311"/>
    </location>
</feature>
<feature type="helix" evidence="24">
    <location>
        <begin position="312"/>
        <end position="319"/>
    </location>
</feature>
<feature type="helix" evidence="24">
    <location>
        <begin position="326"/>
        <end position="333"/>
    </location>
</feature>
<feature type="strand" evidence="24">
    <location>
        <begin position="344"/>
        <end position="352"/>
    </location>
</feature>
<feature type="helix" evidence="24">
    <location>
        <begin position="353"/>
        <end position="361"/>
    </location>
</feature>
<feature type="helix" evidence="24">
    <location>
        <begin position="363"/>
        <end position="366"/>
    </location>
</feature>
<feature type="strand" evidence="24">
    <location>
        <begin position="369"/>
        <end position="372"/>
    </location>
</feature>
<reference key="1">
    <citation type="journal article" date="2003" name="Genome Res.">
        <title>Reevaluating human gene annotation: a second-generation analysis of chromosome 22.</title>
        <authorList>
            <person name="Collins J.E."/>
            <person name="Goward M.E."/>
            <person name="Cole C.G."/>
            <person name="Smink L.J."/>
            <person name="Huckle E.J."/>
            <person name="Knowles S."/>
            <person name="Bye J.M."/>
            <person name="Beare D.M."/>
            <person name="Dunham I."/>
        </authorList>
    </citation>
    <scope>NUCLEOTIDE SEQUENCE [LARGE SCALE MRNA] (ISOFORMS 1 AND 2)</scope>
</reference>
<reference key="2">
    <citation type="journal article" date="2004" name="Nat. Genet.">
        <title>Complete sequencing and characterization of 21,243 full-length human cDNAs.</title>
        <authorList>
            <person name="Ota T."/>
            <person name="Suzuki Y."/>
            <person name="Nishikawa T."/>
            <person name="Otsuki T."/>
            <person name="Sugiyama T."/>
            <person name="Irie R."/>
            <person name="Wakamatsu A."/>
            <person name="Hayashi K."/>
            <person name="Sato H."/>
            <person name="Nagai K."/>
            <person name="Kimura K."/>
            <person name="Makita H."/>
            <person name="Sekine M."/>
            <person name="Obayashi M."/>
            <person name="Nishi T."/>
            <person name="Shibahara T."/>
            <person name="Tanaka T."/>
            <person name="Ishii S."/>
            <person name="Yamamoto J."/>
            <person name="Saito K."/>
            <person name="Kawai Y."/>
            <person name="Isono Y."/>
            <person name="Nakamura Y."/>
            <person name="Nagahari K."/>
            <person name="Murakami K."/>
            <person name="Yasuda T."/>
            <person name="Iwayanagi T."/>
            <person name="Wagatsuma M."/>
            <person name="Shiratori A."/>
            <person name="Sudo H."/>
            <person name="Hosoiri T."/>
            <person name="Kaku Y."/>
            <person name="Kodaira H."/>
            <person name="Kondo H."/>
            <person name="Sugawara M."/>
            <person name="Takahashi M."/>
            <person name="Kanda K."/>
            <person name="Yokoi T."/>
            <person name="Furuya T."/>
            <person name="Kikkawa E."/>
            <person name="Omura Y."/>
            <person name="Abe K."/>
            <person name="Kamihara K."/>
            <person name="Katsuta N."/>
            <person name="Sato K."/>
            <person name="Tanikawa M."/>
            <person name="Yamazaki M."/>
            <person name="Ninomiya K."/>
            <person name="Ishibashi T."/>
            <person name="Yamashita H."/>
            <person name="Murakawa K."/>
            <person name="Fujimori K."/>
            <person name="Tanai H."/>
            <person name="Kimata M."/>
            <person name="Watanabe M."/>
            <person name="Hiraoka S."/>
            <person name="Chiba Y."/>
            <person name="Ishida S."/>
            <person name="Ono Y."/>
            <person name="Takiguchi S."/>
            <person name="Watanabe S."/>
            <person name="Yosida M."/>
            <person name="Hotuta T."/>
            <person name="Kusano J."/>
            <person name="Kanehori K."/>
            <person name="Takahashi-Fujii A."/>
            <person name="Hara H."/>
            <person name="Tanase T.-O."/>
            <person name="Nomura Y."/>
            <person name="Togiya S."/>
            <person name="Komai F."/>
            <person name="Hara R."/>
            <person name="Takeuchi K."/>
            <person name="Arita M."/>
            <person name="Imose N."/>
            <person name="Musashino K."/>
            <person name="Yuuki H."/>
            <person name="Oshima A."/>
            <person name="Sasaki N."/>
            <person name="Aotsuka S."/>
            <person name="Yoshikawa Y."/>
            <person name="Matsunawa H."/>
            <person name="Ichihara T."/>
            <person name="Shiohata N."/>
            <person name="Sano S."/>
            <person name="Moriya S."/>
            <person name="Momiyama H."/>
            <person name="Satoh N."/>
            <person name="Takami S."/>
            <person name="Terashima Y."/>
            <person name="Suzuki O."/>
            <person name="Nakagawa S."/>
            <person name="Senoh A."/>
            <person name="Mizoguchi H."/>
            <person name="Goto Y."/>
            <person name="Shimizu F."/>
            <person name="Wakebe H."/>
            <person name="Hishigaki H."/>
            <person name="Watanabe T."/>
            <person name="Sugiyama A."/>
            <person name="Takemoto M."/>
            <person name="Kawakami B."/>
            <person name="Yamazaki M."/>
            <person name="Watanabe K."/>
            <person name="Kumagai A."/>
            <person name="Itakura S."/>
            <person name="Fukuzumi Y."/>
            <person name="Fujimori Y."/>
            <person name="Komiyama M."/>
            <person name="Tashiro H."/>
            <person name="Tanigami A."/>
            <person name="Fujiwara T."/>
            <person name="Ono T."/>
            <person name="Yamada K."/>
            <person name="Fujii Y."/>
            <person name="Ozaki K."/>
            <person name="Hirao M."/>
            <person name="Ohmori Y."/>
            <person name="Kawabata A."/>
            <person name="Hikiji T."/>
            <person name="Kobatake N."/>
            <person name="Inagaki H."/>
            <person name="Ikema Y."/>
            <person name="Okamoto S."/>
            <person name="Okitani R."/>
            <person name="Kawakami T."/>
            <person name="Noguchi S."/>
            <person name="Itoh T."/>
            <person name="Shigeta K."/>
            <person name="Senba T."/>
            <person name="Matsumura K."/>
            <person name="Nakajima Y."/>
            <person name="Mizuno T."/>
            <person name="Morinaga M."/>
            <person name="Sasaki M."/>
            <person name="Togashi T."/>
            <person name="Oyama M."/>
            <person name="Hata H."/>
            <person name="Watanabe M."/>
            <person name="Komatsu T."/>
            <person name="Mizushima-Sugano J."/>
            <person name="Satoh T."/>
            <person name="Shirai Y."/>
            <person name="Takahashi Y."/>
            <person name="Nakagawa K."/>
            <person name="Okumura K."/>
            <person name="Nagase T."/>
            <person name="Nomura N."/>
            <person name="Kikuchi H."/>
            <person name="Masuho Y."/>
            <person name="Yamashita R."/>
            <person name="Nakai K."/>
            <person name="Yada T."/>
            <person name="Nakamura Y."/>
            <person name="Ohara O."/>
            <person name="Isogai T."/>
            <person name="Sugano S."/>
        </authorList>
    </citation>
    <scope>NUCLEOTIDE SEQUENCE [LARGE SCALE MRNA] (ISOFORM 2)</scope>
    <source>
        <tissue>Caudate nucleus</tissue>
    </source>
</reference>
<reference key="3">
    <citation type="journal article" date="1999" name="Nature">
        <title>The DNA sequence of human chromosome 22.</title>
        <authorList>
            <person name="Dunham I."/>
            <person name="Hunt A.R."/>
            <person name="Collins J.E."/>
            <person name="Bruskiewich R."/>
            <person name="Beare D.M."/>
            <person name="Clamp M."/>
            <person name="Smink L.J."/>
            <person name="Ainscough R."/>
            <person name="Almeida J.P."/>
            <person name="Babbage A.K."/>
            <person name="Bagguley C."/>
            <person name="Bailey J."/>
            <person name="Barlow K.F."/>
            <person name="Bates K.N."/>
            <person name="Beasley O.P."/>
            <person name="Bird C.P."/>
            <person name="Blakey S.E."/>
            <person name="Bridgeman A.M."/>
            <person name="Buck D."/>
            <person name="Burgess J."/>
            <person name="Burrill W.D."/>
            <person name="Burton J."/>
            <person name="Carder C."/>
            <person name="Carter N.P."/>
            <person name="Chen Y."/>
            <person name="Clark G."/>
            <person name="Clegg S.M."/>
            <person name="Cobley V.E."/>
            <person name="Cole C.G."/>
            <person name="Collier R.E."/>
            <person name="Connor R."/>
            <person name="Conroy D."/>
            <person name="Corby N.R."/>
            <person name="Coville G.J."/>
            <person name="Cox A.V."/>
            <person name="Davis J."/>
            <person name="Dawson E."/>
            <person name="Dhami P.D."/>
            <person name="Dockree C."/>
            <person name="Dodsworth S.J."/>
            <person name="Durbin R.M."/>
            <person name="Ellington A.G."/>
            <person name="Evans K.L."/>
            <person name="Fey J.M."/>
            <person name="Fleming K."/>
            <person name="French L."/>
            <person name="Garner A.A."/>
            <person name="Gilbert J.G.R."/>
            <person name="Goward M.E."/>
            <person name="Grafham D.V."/>
            <person name="Griffiths M.N.D."/>
            <person name="Hall C."/>
            <person name="Hall R.E."/>
            <person name="Hall-Tamlyn G."/>
            <person name="Heathcott R.W."/>
            <person name="Ho S."/>
            <person name="Holmes S."/>
            <person name="Hunt S.E."/>
            <person name="Jones M.C."/>
            <person name="Kershaw J."/>
            <person name="Kimberley A.M."/>
            <person name="King A."/>
            <person name="Laird G.K."/>
            <person name="Langford C.F."/>
            <person name="Leversha M.A."/>
            <person name="Lloyd C."/>
            <person name="Lloyd D.M."/>
            <person name="Martyn I.D."/>
            <person name="Mashreghi-Mohammadi M."/>
            <person name="Matthews L.H."/>
            <person name="Mccann O.T."/>
            <person name="Mcclay J."/>
            <person name="Mclaren S."/>
            <person name="McMurray A.A."/>
            <person name="Milne S.A."/>
            <person name="Mortimore B.J."/>
            <person name="Odell C.N."/>
            <person name="Pavitt R."/>
            <person name="Pearce A.V."/>
            <person name="Pearson D."/>
            <person name="Phillimore B.J.C.T."/>
            <person name="Phillips S.H."/>
            <person name="Plumb R.W."/>
            <person name="Ramsay H."/>
            <person name="Ramsey Y."/>
            <person name="Rogers L."/>
            <person name="Ross M.T."/>
            <person name="Scott C.E."/>
            <person name="Sehra H.K."/>
            <person name="Skuce C.D."/>
            <person name="Smalley S."/>
            <person name="Smith M.L."/>
            <person name="Soderlund C."/>
            <person name="Spragon L."/>
            <person name="Steward C.A."/>
            <person name="Sulston J.E."/>
            <person name="Swann R.M."/>
            <person name="Vaudin M."/>
            <person name="Wall M."/>
            <person name="Wallis J.M."/>
            <person name="Whiteley M.N."/>
            <person name="Willey D.L."/>
            <person name="Williams L."/>
            <person name="Williams S.A."/>
            <person name="Williamson H."/>
            <person name="Wilmer T.E."/>
            <person name="Wilming L."/>
            <person name="Wright C.L."/>
            <person name="Hubbard T."/>
            <person name="Bentley D.R."/>
            <person name="Beck S."/>
            <person name="Rogers J."/>
            <person name="Shimizu N."/>
            <person name="Minoshima S."/>
            <person name="Kawasaki K."/>
            <person name="Sasaki T."/>
            <person name="Asakawa S."/>
            <person name="Kudoh J."/>
            <person name="Shintani A."/>
            <person name="Shibuya K."/>
            <person name="Yoshizaki Y."/>
            <person name="Aoki N."/>
            <person name="Mitsuyama S."/>
            <person name="Roe B.A."/>
            <person name="Chen F."/>
            <person name="Chu L."/>
            <person name="Crabtree J."/>
            <person name="Deschamps S."/>
            <person name="Do A."/>
            <person name="Do T."/>
            <person name="Dorman A."/>
            <person name="Fang F."/>
            <person name="Fu Y."/>
            <person name="Hu P."/>
            <person name="Hua A."/>
            <person name="Kenton S."/>
            <person name="Lai H."/>
            <person name="Lao H.I."/>
            <person name="Lewis J."/>
            <person name="Lewis S."/>
            <person name="Lin S.-P."/>
            <person name="Loh P."/>
            <person name="Malaj E."/>
            <person name="Nguyen T."/>
            <person name="Pan H."/>
            <person name="Phan S."/>
            <person name="Qi S."/>
            <person name="Qian Y."/>
            <person name="Ray L."/>
            <person name="Ren Q."/>
            <person name="Shaull S."/>
            <person name="Sloan D."/>
            <person name="Song L."/>
            <person name="Wang Q."/>
            <person name="Wang Y."/>
            <person name="Wang Z."/>
            <person name="White J."/>
            <person name="Willingham D."/>
            <person name="Wu H."/>
            <person name="Yao Z."/>
            <person name="Zhan M."/>
            <person name="Zhang G."/>
            <person name="Chissoe S."/>
            <person name="Murray J."/>
            <person name="Miller N."/>
            <person name="Minx P."/>
            <person name="Fulton R."/>
            <person name="Johnson D."/>
            <person name="Bemis G."/>
            <person name="Bentley D."/>
            <person name="Bradshaw H."/>
            <person name="Bourne S."/>
            <person name="Cordes M."/>
            <person name="Du Z."/>
            <person name="Fulton L."/>
            <person name="Goela D."/>
            <person name="Graves T."/>
            <person name="Hawkins J."/>
            <person name="Hinds K."/>
            <person name="Kemp K."/>
            <person name="Latreille P."/>
            <person name="Layman D."/>
            <person name="Ozersky P."/>
            <person name="Rohlfing T."/>
            <person name="Scheet P."/>
            <person name="Walker C."/>
            <person name="Wamsley A."/>
            <person name="Wohldmann P."/>
            <person name="Pepin K."/>
            <person name="Nelson J."/>
            <person name="Korf I."/>
            <person name="Bedell J.A."/>
            <person name="Hillier L.W."/>
            <person name="Mardis E."/>
            <person name="Waterston R."/>
            <person name="Wilson R."/>
            <person name="Emanuel B.S."/>
            <person name="Shaikh T."/>
            <person name="Kurahashi H."/>
            <person name="Saitta S."/>
            <person name="Budarf M.L."/>
            <person name="McDermid H.E."/>
            <person name="Johnson A."/>
            <person name="Wong A.C.C."/>
            <person name="Morrow B.E."/>
            <person name="Edelmann L."/>
            <person name="Kim U.J."/>
            <person name="Shizuya H."/>
            <person name="Simon M.I."/>
            <person name="Dumanski J.P."/>
            <person name="Peyrard M."/>
            <person name="Kedra D."/>
            <person name="Seroussi E."/>
            <person name="Fransson I."/>
            <person name="Tapia I."/>
            <person name="Bruder C.E."/>
            <person name="O'Brien K.P."/>
            <person name="Wilkinson P."/>
            <person name="Bodenteich A."/>
            <person name="Hartman K."/>
            <person name="Hu X."/>
            <person name="Khan A.S."/>
            <person name="Lane L."/>
            <person name="Tilahun Y."/>
            <person name="Wright H."/>
        </authorList>
    </citation>
    <scope>NUCLEOTIDE SEQUENCE [LARGE SCALE GENOMIC DNA]</scope>
</reference>
<reference key="4">
    <citation type="submission" date="2005-07" db="EMBL/GenBank/DDBJ databases">
        <authorList>
            <person name="Mural R.J."/>
            <person name="Istrail S."/>
            <person name="Sutton G."/>
            <person name="Florea L."/>
            <person name="Halpern A.L."/>
            <person name="Mobarry C.M."/>
            <person name="Lippert R."/>
            <person name="Walenz B."/>
            <person name="Shatkay H."/>
            <person name="Dew I."/>
            <person name="Miller J.R."/>
            <person name="Flanigan M.J."/>
            <person name="Edwards N.J."/>
            <person name="Bolanos R."/>
            <person name="Fasulo D."/>
            <person name="Halldorsson B.V."/>
            <person name="Hannenhalli S."/>
            <person name="Turner R."/>
            <person name="Yooseph S."/>
            <person name="Lu F."/>
            <person name="Nusskern D.R."/>
            <person name="Shue B.C."/>
            <person name="Zheng X.H."/>
            <person name="Zhong F."/>
            <person name="Delcher A.L."/>
            <person name="Huson D.H."/>
            <person name="Kravitz S.A."/>
            <person name="Mouchard L."/>
            <person name="Reinert K."/>
            <person name="Remington K.A."/>
            <person name="Clark A.G."/>
            <person name="Waterman M.S."/>
            <person name="Eichler E.E."/>
            <person name="Adams M.D."/>
            <person name="Hunkapiller M.W."/>
            <person name="Myers E.W."/>
            <person name="Venter J.C."/>
        </authorList>
    </citation>
    <scope>NUCLEOTIDE SEQUENCE [LARGE SCALE GENOMIC DNA]</scope>
</reference>
<reference key="5">
    <citation type="journal article" date="2004" name="Genome Res.">
        <title>The status, quality, and expansion of the NIH full-length cDNA project: the Mammalian Gene Collection (MGC).</title>
        <authorList>
            <consortium name="The MGC Project Team"/>
        </authorList>
    </citation>
    <scope>NUCLEOTIDE SEQUENCE [LARGE SCALE MRNA] (ISOFORMS 1 AND 2)</scope>
    <scope>VARIANT GLY-303</scope>
    <source>
        <tissue>Testis</tissue>
    </source>
</reference>
<reference key="6">
    <citation type="journal article" date="2003" name="J. Biol. Chem.">
        <title>Cloning, expression, characterization, and interaction of two components of a human mitochondrial fatty acid synthase. Malonyltransferase and acyl carrier protein.</title>
        <authorList>
            <person name="Zhang L."/>
            <person name="Joshi A.K."/>
            <person name="Smith S."/>
        </authorList>
    </citation>
    <scope>FUNCTION</scope>
    <scope>CATALYTIC ACTIVITY</scope>
    <scope>SUBCELLULAR LOCATION</scope>
</reference>
<reference key="7">
    <citation type="journal article" date="2011" name="BMC Syst. Biol.">
        <title>Initial characterization of the human central proteome.</title>
        <authorList>
            <person name="Burkard T.R."/>
            <person name="Planyavsky M."/>
            <person name="Kaupe I."/>
            <person name="Breitwieser F.P."/>
            <person name="Buerckstuemmer T."/>
            <person name="Bennett K.L."/>
            <person name="Superti-Furga G."/>
            <person name="Colinge J."/>
        </authorList>
    </citation>
    <scope>IDENTIFICATION BY MASS SPECTROMETRY [LARGE SCALE ANALYSIS]</scope>
</reference>
<reference key="8">
    <citation type="journal article" date="2014" name="J. Proteomics">
        <title>An enzyme assisted RP-RPLC approach for in-depth analysis of human liver phosphoproteome.</title>
        <authorList>
            <person name="Bian Y."/>
            <person name="Song C."/>
            <person name="Cheng K."/>
            <person name="Dong M."/>
            <person name="Wang F."/>
            <person name="Huang J."/>
            <person name="Sun D."/>
            <person name="Wang L."/>
            <person name="Ye M."/>
            <person name="Zou H."/>
        </authorList>
    </citation>
    <scope>IDENTIFICATION BY MASS SPECTROMETRY [LARGE SCALE ANALYSIS]</scope>
    <source>
        <tissue>Liver</tissue>
    </source>
</reference>
<reference key="9">
    <citation type="journal article" date="2015" name="Proteomics">
        <title>N-terminome analysis of the human mitochondrial proteome.</title>
        <authorList>
            <person name="Vaca Jacome A.S."/>
            <person name="Rabilloud T."/>
            <person name="Schaeffer-Reiss C."/>
            <person name="Rompais M."/>
            <person name="Ayoub D."/>
            <person name="Lane L."/>
            <person name="Bairoch A."/>
            <person name="Van Dorsselaer A."/>
            <person name="Carapito C."/>
        </authorList>
    </citation>
    <scope>IDENTIFICATION BY MASS SPECTROMETRY [LARGE SCALE ANALYSIS]</scope>
</reference>
<reference key="10">
    <citation type="journal article" date="2020" name="Hum. Mol. Genet.">
        <title>Novel mutations in malonyl-CoA-acyl carrier protein transacylase provoke autosomal recessive optic neuropathy.</title>
        <authorList>
            <person name="Li H."/>
            <person name="Yuan S."/>
            <person name="Minegishi Y."/>
            <person name="Suga A."/>
            <person name="Yoshitake K."/>
            <person name="Sheng X."/>
            <person name="Ye J."/>
            <person name="Smith S."/>
            <person name="Bunkoczi G."/>
            <person name="Yamamoto M."/>
            <person name="Iwata T."/>
        </authorList>
    </citation>
    <scope>VARIANTS OPA15 ARG-81 AND TRP-212</scope>
</reference>
<reference key="11">
    <citation type="journal article" date="2021" name="Genes (Basel)">
        <title>MCAT Mutations Cause Nuclear LHON-like Optic Neuropathy.</title>
        <authorList>
            <person name="Gerber S."/>
            <person name="Orssaud C."/>
            <person name="Kaplan J."/>
            <person name="Johansson C."/>
            <person name="Rozet J.M."/>
        </authorList>
    </citation>
    <scope>VARIANT OPA15 LYS-275</scope>
</reference>
<reference evidence="19" key="12">
    <citation type="journal article" date="2009" name="Chem. Biol.">
        <title>Structural basis for different specificities of acyltransferases associated with the human cytosolic and mitochondrial fatty acid synthases.</title>
        <authorList>
            <person name="Bunkoczi G."/>
            <person name="Misquitta S."/>
            <person name="Wu X."/>
            <person name="Lee W.H."/>
            <person name="Rojkova A."/>
            <person name="Kochan G."/>
            <person name="Kavanagh K.L."/>
            <person name="Oppermann U."/>
            <person name="Smith S."/>
        </authorList>
    </citation>
    <scope>X-RAY CRYSTALLOGRAPHY (1.55 ANGSTROMS) OF 60-375</scope>
    <scope>FUNCTION</scope>
    <scope>CATALYTIC ACTIVITY</scope>
    <scope>MUTAGENESIS OF ARG-178</scope>
</reference>
<reference evidence="20 21 22 23" key="13">
    <citation type="journal article" date="2023" name="Nature">
        <title>Principles of mitoribosomal small subunit assembly in eukaryotes.</title>
        <authorList>
            <person name="Harper N.J."/>
            <person name="Burnside C."/>
            <person name="Klinge S."/>
        </authorList>
    </citation>
    <scope>STRUCTURE BY ELECTRON MICROSCOPY (2.36 ANGSTROMS) IN COMPLEX WITH THE MITOCHONDRIAL RIBOSOME</scope>
    <scope>FUNCTION</scope>
</reference>
<evidence type="ECO:0000250" key="1">
    <source>
        <dbReference type="UniProtKB" id="P0AAI9"/>
    </source>
</evidence>
<evidence type="ECO:0000250" key="2">
    <source>
        <dbReference type="UniProtKB" id="Q8R3F5"/>
    </source>
</evidence>
<evidence type="ECO:0000255" key="3"/>
<evidence type="ECO:0000269" key="4">
    <source>
    </source>
</evidence>
<evidence type="ECO:0000269" key="5">
    <source>
    </source>
</evidence>
<evidence type="ECO:0000269" key="6">
    <source>
    </source>
</evidence>
<evidence type="ECO:0000269" key="7">
    <source>
    </source>
</evidence>
<evidence type="ECO:0000269" key="8">
    <source>
    </source>
</evidence>
<evidence type="ECO:0000269" key="9">
    <source>
    </source>
</evidence>
<evidence type="ECO:0000303" key="10">
    <source>
    </source>
</evidence>
<evidence type="ECO:0000303" key="11">
    <source>
    </source>
</evidence>
<evidence type="ECO:0000303" key="12">
    <source>
    </source>
</evidence>
<evidence type="ECO:0000303" key="13">
    <source>
    </source>
</evidence>
<evidence type="ECO:0000303" key="14">
    <source>
    </source>
</evidence>
<evidence type="ECO:0000305" key="15"/>
<evidence type="ECO:0000305" key="16">
    <source>
    </source>
</evidence>
<evidence type="ECO:0000305" key="17">
    <source>
    </source>
</evidence>
<evidence type="ECO:0000312" key="18">
    <source>
        <dbReference type="HGNC" id="HGNC:29622"/>
    </source>
</evidence>
<evidence type="ECO:0007744" key="19">
    <source>
        <dbReference type="PDB" id="2C2N"/>
    </source>
</evidence>
<evidence type="ECO:0007744" key="20">
    <source>
        <dbReference type="PDB" id="8CSP"/>
    </source>
</evidence>
<evidence type="ECO:0007744" key="21">
    <source>
        <dbReference type="PDB" id="8CSQ"/>
    </source>
</evidence>
<evidence type="ECO:0007744" key="22">
    <source>
        <dbReference type="PDB" id="8CSR"/>
    </source>
</evidence>
<evidence type="ECO:0007744" key="23">
    <source>
        <dbReference type="PDB" id="8CSS"/>
    </source>
</evidence>
<evidence type="ECO:0007829" key="24">
    <source>
        <dbReference type="PDB" id="2C2N"/>
    </source>
</evidence>
<evidence type="ECO:0007829" key="25">
    <source>
        <dbReference type="PDB" id="8CSS"/>
    </source>
</evidence>
<sequence length="390" mass="42962">MSVRVARVAWVRGLGASYRRGASSFPVPPPGAQGVAELLRDATGAEEEAPWAATERRMPGQCSVLLFPGQGSQVVGMGRGLLNYPRVRELYAAARRVLGYDLLELSLHGPQETLDRTVHCQPAIFVASLAAVEKLHHLQPSVIENCVAAAGFSVGEFAALVFAGAMEFAEGLYAVKIRAEAMQEASEAVPSGMLSVLGQPQSKFNFACLEAREHCKSLGIENPVCEVSNYLFPDCRVISGHQEALRFLQKNSSKFHFRRTRMLPVSGAFHTRLMEPAVEPLTQALKAVDIKKPLVSVYSNVHAHRYRHPGHIHKLLAQQLVSPVKWEQTMHAIYERKKGRGFPQTFEVGPGRQLGAILKSCNMQAWKSYSAVDVLQTLEHVDLDPQEPPR</sequence>
<protein>
    <recommendedName>
        <fullName evidence="15">Malonyl-CoA-acyl carrier protein transacylase, mitochondrial</fullName>
        <shortName>MCT</shortName>
        <ecNumber evidence="4 6">2.3.1.39</ecNumber>
    </recommendedName>
    <alternativeName>
        <fullName>Mitochondrial malonyl CoA:ACP acyltransferase</fullName>
    </alternativeName>
    <alternativeName>
        <fullName>Mitochondrial malonyltransferase</fullName>
    </alternativeName>
    <alternativeName>
        <fullName>[Acyl-carrier-protein] malonyltransferase</fullName>
    </alternativeName>
</protein>
<dbReference type="EC" id="2.3.1.39" evidence="4 6"/>
<dbReference type="EMBL" id="AL359401">
    <property type="protein sequence ID" value="CAB94789.1"/>
    <property type="molecule type" value="mRNA"/>
</dbReference>
<dbReference type="EMBL" id="AL359403">
    <property type="protein sequence ID" value="CAB94790.1"/>
    <property type="molecule type" value="mRNA"/>
</dbReference>
<dbReference type="EMBL" id="AK314059">
    <property type="protein sequence ID" value="BAG36765.1"/>
    <property type="molecule type" value="mRNA"/>
</dbReference>
<dbReference type="EMBL" id="AL022237">
    <property type="protein sequence ID" value="CAQ07851.1"/>
    <property type="molecule type" value="Genomic_DNA"/>
</dbReference>
<dbReference type="EMBL" id="AL022237">
    <property type="protein sequence ID" value="CAA18261.1"/>
    <property type="molecule type" value="Genomic_DNA"/>
</dbReference>
<dbReference type="EMBL" id="CH471138">
    <property type="protein sequence ID" value="EAW73286.1"/>
    <property type="molecule type" value="Genomic_DNA"/>
</dbReference>
<dbReference type="EMBL" id="BC030985">
    <property type="protein sequence ID" value="AAH30985.1"/>
    <property type="molecule type" value="mRNA"/>
</dbReference>
<dbReference type="EMBL" id="BC042195">
    <property type="protein sequence ID" value="AAH42195.2"/>
    <property type="molecule type" value="mRNA"/>
</dbReference>
<dbReference type="CCDS" id="CCDS14045.1">
    <molecule id="Q8IVS2-2"/>
</dbReference>
<dbReference type="CCDS" id="CCDS33660.1">
    <molecule id="Q8IVS2-1"/>
</dbReference>
<dbReference type="RefSeq" id="NP_055322.1">
    <molecule id="Q8IVS2-2"/>
    <property type="nucleotide sequence ID" value="NM_014507.3"/>
</dbReference>
<dbReference type="RefSeq" id="NP_775738.3">
    <molecule id="Q8IVS2-1"/>
    <property type="nucleotide sequence ID" value="NM_173467.4"/>
</dbReference>
<dbReference type="PDB" id="2C2N">
    <property type="method" value="X-ray"/>
    <property type="resolution" value="1.55 A"/>
    <property type="chains" value="A/B=60-375"/>
</dbReference>
<dbReference type="PDB" id="8CSP">
    <property type="method" value="EM"/>
    <property type="resolution" value="2.66 A"/>
    <property type="chains" value="8=1-390"/>
</dbReference>
<dbReference type="PDB" id="8CSQ">
    <property type="method" value="EM"/>
    <property type="resolution" value="2.54 A"/>
    <property type="chains" value="8=1-390"/>
</dbReference>
<dbReference type="PDB" id="8CSR">
    <property type="method" value="EM"/>
    <property type="resolution" value="2.54 A"/>
    <property type="chains" value="8=1-390"/>
</dbReference>
<dbReference type="PDB" id="8CSS">
    <property type="method" value="EM"/>
    <property type="resolution" value="2.36 A"/>
    <property type="chains" value="8=1-390"/>
</dbReference>
<dbReference type="PDBsum" id="2C2N"/>
<dbReference type="PDBsum" id="8CSP"/>
<dbReference type="PDBsum" id="8CSQ"/>
<dbReference type="PDBsum" id="8CSR"/>
<dbReference type="PDBsum" id="8CSS"/>
<dbReference type="EMDB" id="EMD-26966"/>
<dbReference type="EMDB" id="EMD-26967"/>
<dbReference type="EMDB" id="EMD-26968"/>
<dbReference type="EMDB" id="EMD-26969"/>
<dbReference type="SMR" id="Q8IVS2"/>
<dbReference type="BioGRID" id="118161">
    <property type="interactions" value="142"/>
</dbReference>
<dbReference type="FunCoup" id="Q8IVS2">
    <property type="interactions" value="1896"/>
</dbReference>
<dbReference type="IntAct" id="Q8IVS2">
    <property type="interactions" value="81"/>
</dbReference>
<dbReference type="MINT" id="Q8IVS2"/>
<dbReference type="STRING" id="9606.ENSP00000290429"/>
<dbReference type="DrugBank" id="DB07344">
    <property type="generic name" value="3,6,9,12,15-PENTAOXAHEPTADECAN-1-OL"/>
</dbReference>
<dbReference type="SwissLipids" id="SLP:000001251"/>
<dbReference type="GlyGen" id="Q8IVS2">
    <property type="glycosylation" value="1 site, 1 O-linked glycan (1 site)"/>
</dbReference>
<dbReference type="iPTMnet" id="Q8IVS2"/>
<dbReference type="PhosphoSitePlus" id="Q8IVS2"/>
<dbReference type="SwissPalm" id="Q8IVS2"/>
<dbReference type="BioMuta" id="MCAT"/>
<dbReference type="DMDM" id="48428076"/>
<dbReference type="jPOST" id="Q8IVS2"/>
<dbReference type="MassIVE" id="Q8IVS2"/>
<dbReference type="PaxDb" id="9606-ENSP00000290429"/>
<dbReference type="PeptideAtlas" id="Q8IVS2"/>
<dbReference type="ProteomicsDB" id="70755">
    <molecule id="Q8IVS2-1"/>
</dbReference>
<dbReference type="ProteomicsDB" id="70756">
    <molecule id="Q8IVS2-2"/>
</dbReference>
<dbReference type="Pumba" id="Q8IVS2"/>
<dbReference type="Antibodypedia" id="27475">
    <property type="antibodies" value="225 antibodies from 23 providers"/>
</dbReference>
<dbReference type="DNASU" id="27349"/>
<dbReference type="Ensembl" id="ENST00000290429.11">
    <molecule id="Q8IVS2-1"/>
    <property type="protein sequence ID" value="ENSP00000290429.5"/>
    <property type="gene ID" value="ENSG00000100294.13"/>
</dbReference>
<dbReference type="Ensembl" id="ENST00000327555.5">
    <molecule id="Q8IVS2-2"/>
    <property type="protein sequence ID" value="ENSP00000331306.5"/>
    <property type="gene ID" value="ENSG00000100294.13"/>
</dbReference>
<dbReference type="GeneID" id="27349"/>
<dbReference type="KEGG" id="hsa:27349"/>
<dbReference type="MANE-Select" id="ENST00000290429.11">
    <property type="protein sequence ID" value="ENSP00000290429.5"/>
    <property type="RefSeq nucleotide sequence ID" value="NM_173467.5"/>
    <property type="RefSeq protein sequence ID" value="NP_775738.3"/>
</dbReference>
<dbReference type="UCSC" id="uc003bdl.2">
    <molecule id="Q8IVS2-1"/>
    <property type="organism name" value="human"/>
</dbReference>
<dbReference type="AGR" id="HGNC:29622"/>
<dbReference type="CTD" id="27349"/>
<dbReference type="DisGeNET" id="27349"/>
<dbReference type="GeneCards" id="MCAT"/>
<dbReference type="HGNC" id="HGNC:29622">
    <property type="gene designation" value="MCAT"/>
</dbReference>
<dbReference type="HPA" id="ENSG00000100294">
    <property type="expression patterns" value="Low tissue specificity"/>
</dbReference>
<dbReference type="MalaCards" id="MCAT"/>
<dbReference type="MIM" id="614479">
    <property type="type" value="gene"/>
</dbReference>
<dbReference type="MIM" id="620583">
    <property type="type" value="phenotype"/>
</dbReference>
<dbReference type="neXtProt" id="NX_Q8IVS2"/>
<dbReference type="OpenTargets" id="ENSG00000100294"/>
<dbReference type="Orphanet" id="98676">
    <property type="disease" value="Autosomal recessive isolated optic atrophy"/>
</dbReference>
<dbReference type="PharmGKB" id="PA162395058"/>
<dbReference type="VEuPathDB" id="HostDB:ENSG00000100294"/>
<dbReference type="eggNOG" id="KOG2926">
    <property type="taxonomic scope" value="Eukaryota"/>
</dbReference>
<dbReference type="GeneTree" id="ENSGT00390000013715"/>
<dbReference type="HOGENOM" id="CLU_030558_2_1_1"/>
<dbReference type="InParanoid" id="Q8IVS2"/>
<dbReference type="OMA" id="AANYNCP"/>
<dbReference type="OrthoDB" id="541883at2759"/>
<dbReference type="PAN-GO" id="Q8IVS2">
    <property type="GO annotations" value="3 GO annotations based on evolutionary models"/>
</dbReference>
<dbReference type="PhylomeDB" id="Q8IVS2"/>
<dbReference type="TreeFam" id="TF313401"/>
<dbReference type="BioCyc" id="MetaCyc:HS02028-MONOMER"/>
<dbReference type="BRENDA" id="2.3.1.39">
    <property type="organism ID" value="2681"/>
</dbReference>
<dbReference type="PathwayCommons" id="Q8IVS2"/>
<dbReference type="Reactome" id="R-HSA-77289">
    <property type="pathway name" value="Mitochondrial Fatty Acid Beta-Oxidation"/>
</dbReference>
<dbReference type="SignaLink" id="Q8IVS2"/>
<dbReference type="SIGNOR" id="Q8IVS2"/>
<dbReference type="UniPathway" id="UPA00094"/>
<dbReference type="BioGRID-ORCS" id="27349">
    <property type="hits" value="110 hits in 1157 CRISPR screens"/>
</dbReference>
<dbReference type="ChiTaRS" id="MCAT">
    <property type="organism name" value="human"/>
</dbReference>
<dbReference type="EvolutionaryTrace" id="Q8IVS2"/>
<dbReference type="GeneWiki" id="MCAT_(gene)"/>
<dbReference type="GenomeRNAi" id="27349"/>
<dbReference type="Pharos" id="Q8IVS2">
    <property type="development level" value="Tbio"/>
</dbReference>
<dbReference type="PRO" id="PR:Q8IVS2"/>
<dbReference type="Proteomes" id="UP000005640">
    <property type="component" value="Chromosome 22"/>
</dbReference>
<dbReference type="RNAct" id="Q8IVS2">
    <property type="molecule type" value="protein"/>
</dbReference>
<dbReference type="Bgee" id="ENSG00000100294">
    <property type="expression patterns" value="Expressed in mucosa of transverse colon and 180 other cell types or tissues"/>
</dbReference>
<dbReference type="ExpressionAtlas" id="Q8IVS2">
    <property type="expression patterns" value="baseline and differential"/>
</dbReference>
<dbReference type="GO" id="GO:0005759">
    <property type="term" value="C:mitochondrial matrix"/>
    <property type="evidence" value="ECO:0000304"/>
    <property type="project" value="Reactome"/>
</dbReference>
<dbReference type="GO" id="GO:0005739">
    <property type="term" value="C:mitochondrion"/>
    <property type="evidence" value="ECO:0000314"/>
    <property type="project" value="HPA"/>
</dbReference>
<dbReference type="GO" id="GO:0004314">
    <property type="term" value="F:[acyl-carrier-protein] S-malonyltransferase activity"/>
    <property type="evidence" value="ECO:0000314"/>
    <property type="project" value="UniProtKB"/>
</dbReference>
<dbReference type="GO" id="GO:0003723">
    <property type="term" value="F:RNA binding"/>
    <property type="evidence" value="ECO:0007005"/>
    <property type="project" value="UniProtKB"/>
</dbReference>
<dbReference type="GO" id="GO:0006635">
    <property type="term" value="P:fatty acid beta-oxidation"/>
    <property type="evidence" value="ECO:0000304"/>
    <property type="project" value="Reactome"/>
</dbReference>
<dbReference type="GO" id="GO:0006633">
    <property type="term" value="P:fatty acid biosynthetic process"/>
    <property type="evidence" value="ECO:0000314"/>
    <property type="project" value="UniProtKB"/>
</dbReference>
<dbReference type="GO" id="GO:0180026">
    <property type="term" value="P:mitochondrial small ribosomal subunit assembly"/>
    <property type="evidence" value="ECO:0000314"/>
    <property type="project" value="UniProtKB"/>
</dbReference>
<dbReference type="FunFam" id="3.30.70.250:FF:000005">
    <property type="entry name" value="Malonyl-CoA-acyl carrier protein transacylase, mitochondrial"/>
    <property type="match status" value="1"/>
</dbReference>
<dbReference type="Gene3D" id="3.30.70.250">
    <property type="entry name" value="Malonyl-CoA ACP transacylase, ACP-binding"/>
    <property type="match status" value="1"/>
</dbReference>
<dbReference type="Gene3D" id="3.40.366.10">
    <property type="entry name" value="Malonyl-Coenzyme A Acyl Carrier Protein, domain 2"/>
    <property type="match status" value="1"/>
</dbReference>
<dbReference type="InterPro" id="IPR001227">
    <property type="entry name" value="Ac_transferase_dom_sf"/>
</dbReference>
<dbReference type="InterPro" id="IPR014043">
    <property type="entry name" value="Acyl_transferase_dom"/>
</dbReference>
<dbReference type="InterPro" id="IPR016035">
    <property type="entry name" value="Acyl_Trfase/lysoPLipase"/>
</dbReference>
<dbReference type="InterPro" id="IPR016036">
    <property type="entry name" value="Malonyl_transacylase_ACP-bd"/>
</dbReference>
<dbReference type="InterPro" id="IPR052760">
    <property type="entry name" value="Mitochondrial_malonyltrans"/>
</dbReference>
<dbReference type="PANTHER" id="PTHR47170">
    <property type="entry name" value="MALONYL-COA ACP TRANSACYLASE, ACP-BINDING"/>
    <property type="match status" value="1"/>
</dbReference>
<dbReference type="PANTHER" id="PTHR47170:SF2">
    <property type="entry name" value="MALONYL-COA:ACP TRANSACYLASE (MAT) DOMAIN-CONTAINING PROTEIN"/>
    <property type="match status" value="1"/>
</dbReference>
<dbReference type="Pfam" id="PF00698">
    <property type="entry name" value="Acyl_transf_1"/>
    <property type="match status" value="1"/>
</dbReference>
<dbReference type="SMART" id="SM00827">
    <property type="entry name" value="PKS_AT"/>
    <property type="match status" value="1"/>
</dbReference>
<dbReference type="SUPFAM" id="SSF52151">
    <property type="entry name" value="FabD/lysophospholipase-like"/>
    <property type="match status" value="1"/>
</dbReference>
<dbReference type="SUPFAM" id="SSF55048">
    <property type="entry name" value="Probable ACP-binding domain of malonyl-CoA ACP transacylase"/>
    <property type="match status" value="1"/>
</dbReference>
<proteinExistence type="evidence at protein level"/>
<name>FABD_HUMAN</name>
<comment type="function">
    <text evidence="4 6 9">Catalyzes the transfer of a malonyl moiety from malonyl-CoA to the free thiol group of the phosphopantetheine arm of the mitochondrial ACP protein (NDUFAB1) (PubMed:12882974, PubMed:19549604). This suggests the existence of the biosynthesis of fatty acids in mitochondria (PubMed:12882974). Also acts as a mitochondrial small ribosomal subunit (mt-SSU) assembly factor (PubMed:36482135).</text>
</comment>
<comment type="catalytic activity">
    <reaction evidence="4 6">
        <text>holo-[ACP] + malonyl-CoA = malonyl-[ACP] + CoA</text>
        <dbReference type="Rhea" id="RHEA:41792"/>
        <dbReference type="Rhea" id="RHEA-COMP:9623"/>
        <dbReference type="Rhea" id="RHEA-COMP:9685"/>
        <dbReference type="ChEBI" id="CHEBI:57287"/>
        <dbReference type="ChEBI" id="CHEBI:57384"/>
        <dbReference type="ChEBI" id="CHEBI:64479"/>
        <dbReference type="ChEBI" id="CHEBI:78449"/>
        <dbReference type="EC" id="2.3.1.39"/>
    </reaction>
    <physiologicalReaction direction="left-to-right" evidence="16 17">
        <dbReference type="Rhea" id="RHEA:41793"/>
    </physiologicalReaction>
</comment>
<comment type="biophysicochemical properties">
    <kinetics>
        <KM evidence="6">3.1 uM for malonyl-CoA</KM>
    </kinetics>
</comment>
<comment type="pathway">
    <text>Lipid metabolism; fatty acid biosynthesis.</text>
</comment>
<comment type="subcellular location">
    <subcellularLocation>
        <location evidence="4">Mitochondrion</location>
    </subcellularLocation>
</comment>
<comment type="alternative products">
    <event type="alternative splicing"/>
    <isoform>
        <id>Q8IVS2-1</id>
        <name>1</name>
        <sequence type="displayed"/>
    </isoform>
    <isoform>
        <id>Q8IVS2-2</id>
        <name>2</name>
        <sequence type="described" ref="VSP_010517 VSP_010518"/>
    </isoform>
</comment>
<comment type="disease" evidence="7 8">
    <disease id="DI-06790">
        <name>Optic atrophy 15</name>
        <acronym>OPA15</acronym>
        <description>A disease characterized by visual impairment in association with optic atrophy. Atrophy of the optic disk indicates a deficiency in the number of nerve fibers which arise in the retina and converge to form the optic disk, optic nerve, optic chiasm and optic tracts. OPA15 is an autosomal recessive form.</description>
        <dbReference type="MIM" id="620583"/>
    </disease>
    <text>The disease is caused by variants affecting the gene represented in this entry.</text>
</comment>
<comment type="similarity">
    <text evidence="15">Belongs to the type II malonyltransferase family.</text>
</comment>